<feature type="chain" id="PRO_1000018377" description="Tryptophan synthase beta chain">
    <location>
        <begin position="1"/>
        <end position="406"/>
    </location>
</feature>
<feature type="modified residue" description="N6-(pyridoxal phosphate)lysine" evidence="1">
    <location>
        <position position="95"/>
    </location>
</feature>
<accession>Q4KKP4</accession>
<keyword id="KW-0028">Amino-acid biosynthesis</keyword>
<keyword id="KW-0057">Aromatic amino acid biosynthesis</keyword>
<keyword id="KW-0456">Lyase</keyword>
<keyword id="KW-0663">Pyridoxal phosphate</keyword>
<keyword id="KW-0822">Tryptophan biosynthesis</keyword>
<proteinExistence type="inferred from homology"/>
<evidence type="ECO:0000255" key="1">
    <source>
        <dbReference type="HAMAP-Rule" id="MF_00133"/>
    </source>
</evidence>
<dbReference type="EC" id="4.2.1.20" evidence="1"/>
<dbReference type="EMBL" id="CP000076">
    <property type="protein sequence ID" value="AAY95455.1"/>
    <property type="molecule type" value="Genomic_DNA"/>
</dbReference>
<dbReference type="RefSeq" id="WP_011058426.1">
    <property type="nucleotide sequence ID" value="NC_004129.6"/>
</dbReference>
<dbReference type="SMR" id="Q4KKP4"/>
<dbReference type="STRING" id="220664.PFL_0037"/>
<dbReference type="KEGG" id="pfl:PFL_0037"/>
<dbReference type="PATRIC" id="fig|220664.5.peg.38"/>
<dbReference type="eggNOG" id="COG0133">
    <property type="taxonomic scope" value="Bacteria"/>
</dbReference>
<dbReference type="HOGENOM" id="CLU_016734_3_1_6"/>
<dbReference type="UniPathway" id="UPA00035">
    <property type="reaction ID" value="UER00044"/>
</dbReference>
<dbReference type="Proteomes" id="UP000008540">
    <property type="component" value="Chromosome"/>
</dbReference>
<dbReference type="GO" id="GO:0005737">
    <property type="term" value="C:cytoplasm"/>
    <property type="evidence" value="ECO:0007669"/>
    <property type="project" value="TreeGrafter"/>
</dbReference>
<dbReference type="GO" id="GO:0004834">
    <property type="term" value="F:tryptophan synthase activity"/>
    <property type="evidence" value="ECO:0007669"/>
    <property type="project" value="UniProtKB-UniRule"/>
</dbReference>
<dbReference type="CDD" id="cd06446">
    <property type="entry name" value="Trp-synth_B"/>
    <property type="match status" value="1"/>
</dbReference>
<dbReference type="FunFam" id="3.40.50.1100:FF:000001">
    <property type="entry name" value="Tryptophan synthase beta chain"/>
    <property type="match status" value="1"/>
</dbReference>
<dbReference type="FunFam" id="3.40.50.1100:FF:000004">
    <property type="entry name" value="Tryptophan synthase beta chain"/>
    <property type="match status" value="1"/>
</dbReference>
<dbReference type="Gene3D" id="3.40.50.1100">
    <property type="match status" value="2"/>
</dbReference>
<dbReference type="HAMAP" id="MF_00133">
    <property type="entry name" value="Trp_synth_beta"/>
    <property type="match status" value="1"/>
</dbReference>
<dbReference type="InterPro" id="IPR006653">
    <property type="entry name" value="Trp_synth_b_CS"/>
</dbReference>
<dbReference type="InterPro" id="IPR006654">
    <property type="entry name" value="Trp_synth_beta"/>
</dbReference>
<dbReference type="InterPro" id="IPR023026">
    <property type="entry name" value="Trp_synth_beta/beta-like"/>
</dbReference>
<dbReference type="InterPro" id="IPR001926">
    <property type="entry name" value="TrpB-like_PALP"/>
</dbReference>
<dbReference type="InterPro" id="IPR036052">
    <property type="entry name" value="TrpB-like_PALP_sf"/>
</dbReference>
<dbReference type="NCBIfam" id="TIGR00263">
    <property type="entry name" value="trpB"/>
    <property type="match status" value="1"/>
</dbReference>
<dbReference type="PANTHER" id="PTHR48077:SF3">
    <property type="entry name" value="TRYPTOPHAN SYNTHASE"/>
    <property type="match status" value="1"/>
</dbReference>
<dbReference type="PANTHER" id="PTHR48077">
    <property type="entry name" value="TRYPTOPHAN SYNTHASE-RELATED"/>
    <property type="match status" value="1"/>
</dbReference>
<dbReference type="Pfam" id="PF00291">
    <property type="entry name" value="PALP"/>
    <property type="match status" value="1"/>
</dbReference>
<dbReference type="PIRSF" id="PIRSF001413">
    <property type="entry name" value="Trp_syn_beta"/>
    <property type="match status" value="1"/>
</dbReference>
<dbReference type="SUPFAM" id="SSF53686">
    <property type="entry name" value="Tryptophan synthase beta subunit-like PLP-dependent enzymes"/>
    <property type="match status" value="1"/>
</dbReference>
<dbReference type="PROSITE" id="PS00168">
    <property type="entry name" value="TRP_SYNTHASE_BETA"/>
    <property type="match status" value="1"/>
</dbReference>
<sequence length="406" mass="44405">MTQSQLRNGPDDNGLFGAFGGRYVAETLMPLILDLAREYEKAKEDPEFLKELAYFQRDYVGRPSPLYFAERLTEHCGGAKIYLKREELNHTGAHKINNCIGQILLARRMGKKRIIAETGAGMHGVATATVAARFGLDCVIYMGTTDIERQQANVFRMKLLGAEVIPVVAGTGTLKDAMNEALRDWVTNVDSTFYLIGTVAGPHPYPAMVRDFQAVIGKETREQMQAQEGRLPDSLVACIGGGSNAMGLFHPFLDDKSVEIIGVEAAGYGIETGKHAASLNGGVPGVLHGNRTFLLQDDDGQIIDAHSISAGLDYPGIGPEHAWLHDIGRVEYTSVTDDEALAAFHQCCRLEGIIPALESAHALAEVFKRAPNLPKDHLMVVNLSGRGDKDMQTVMHHMQQSQQEKH</sequence>
<protein>
    <recommendedName>
        <fullName evidence="1">Tryptophan synthase beta chain</fullName>
        <ecNumber evidence="1">4.2.1.20</ecNumber>
    </recommendedName>
</protein>
<organism>
    <name type="scientific">Pseudomonas fluorescens (strain ATCC BAA-477 / NRRL B-23932 / Pf-5)</name>
    <dbReference type="NCBI Taxonomy" id="220664"/>
    <lineage>
        <taxon>Bacteria</taxon>
        <taxon>Pseudomonadati</taxon>
        <taxon>Pseudomonadota</taxon>
        <taxon>Gammaproteobacteria</taxon>
        <taxon>Pseudomonadales</taxon>
        <taxon>Pseudomonadaceae</taxon>
        <taxon>Pseudomonas</taxon>
    </lineage>
</organism>
<comment type="function">
    <text evidence="1">The beta subunit is responsible for the synthesis of L-tryptophan from indole and L-serine.</text>
</comment>
<comment type="catalytic activity">
    <reaction evidence="1">
        <text>(1S,2R)-1-C-(indol-3-yl)glycerol 3-phosphate + L-serine = D-glyceraldehyde 3-phosphate + L-tryptophan + H2O</text>
        <dbReference type="Rhea" id="RHEA:10532"/>
        <dbReference type="ChEBI" id="CHEBI:15377"/>
        <dbReference type="ChEBI" id="CHEBI:33384"/>
        <dbReference type="ChEBI" id="CHEBI:57912"/>
        <dbReference type="ChEBI" id="CHEBI:58866"/>
        <dbReference type="ChEBI" id="CHEBI:59776"/>
        <dbReference type="EC" id="4.2.1.20"/>
    </reaction>
</comment>
<comment type="cofactor">
    <cofactor evidence="1">
        <name>pyridoxal 5'-phosphate</name>
        <dbReference type="ChEBI" id="CHEBI:597326"/>
    </cofactor>
</comment>
<comment type="pathway">
    <text evidence="1">Amino-acid biosynthesis; L-tryptophan biosynthesis; L-tryptophan from chorismate: step 5/5.</text>
</comment>
<comment type="subunit">
    <text evidence="1">Tetramer of two alpha and two beta chains.</text>
</comment>
<comment type="similarity">
    <text evidence="1">Belongs to the TrpB family.</text>
</comment>
<reference key="1">
    <citation type="journal article" date="2005" name="Nat. Biotechnol.">
        <title>Complete genome sequence of the plant commensal Pseudomonas fluorescens Pf-5.</title>
        <authorList>
            <person name="Paulsen I.T."/>
            <person name="Press C.M."/>
            <person name="Ravel J."/>
            <person name="Kobayashi D.Y."/>
            <person name="Myers G.S.A."/>
            <person name="Mavrodi D.V."/>
            <person name="DeBoy R.T."/>
            <person name="Seshadri R."/>
            <person name="Ren Q."/>
            <person name="Madupu R."/>
            <person name="Dodson R.J."/>
            <person name="Durkin A.S."/>
            <person name="Brinkac L.M."/>
            <person name="Daugherty S.C."/>
            <person name="Sullivan S.A."/>
            <person name="Rosovitz M.J."/>
            <person name="Gwinn M.L."/>
            <person name="Zhou L."/>
            <person name="Schneider D.J."/>
            <person name="Cartinhour S.W."/>
            <person name="Nelson W.C."/>
            <person name="Weidman J."/>
            <person name="Watkins K."/>
            <person name="Tran K."/>
            <person name="Khouri H."/>
            <person name="Pierson E.A."/>
            <person name="Pierson L.S. III"/>
            <person name="Thomashow L.S."/>
            <person name="Loper J.E."/>
        </authorList>
    </citation>
    <scope>NUCLEOTIDE SEQUENCE [LARGE SCALE GENOMIC DNA]</scope>
    <source>
        <strain>ATCC BAA-477 / NRRL B-23932 / Pf-5</strain>
    </source>
</reference>
<name>TRPB_PSEF5</name>
<gene>
    <name evidence="1" type="primary">trpB</name>
    <name type="ordered locus">PFL_0037</name>
</gene>